<keyword id="KW-0002">3D-structure</keyword>
<keyword id="KW-0053">Apoptosis</keyword>
<keyword id="KW-0225">Disease variant</keyword>
<keyword id="KW-0378">Hydrolase</keyword>
<keyword id="KW-1017">Isopeptide bond</keyword>
<keyword id="KW-0472">Membrane</keyword>
<keyword id="KW-0496">Mitochondrion</keyword>
<keyword id="KW-1000">Mitochondrion outer membrane</keyword>
<keyword id="KW-1267">Proteomics identification</keyword>
<keyword id="KW-1185">Reference proteome</keyword>
<keyword id="KW-0812">Transmembrane</keyword>
<keyword id="KW-1133">Transmembrane helix</keyword>
<keyword id="KW-0832">Ubl conjugation</keyword>
<protein>
    <recommendedName>
        <fullName>Peptidyl-tRNA hydrolase 2, mitochondrial</fullName>
        <shortName>PTH 2</shortName>
        <ecNumber evidence="2">3.1.1.29</ecNumber>
    </recommendedName>
    <alternativeName>
        <fullName>Bcl-2 inhibitor of transcription 1</fullName>
    </alternativeName>
</protein>
<feature type="chain" id="PRO_0000029862" description="Peptidyl-tRNA hydrolase 2, mitochondrial">
    <location>
        <begin position="1"/>
        <end position="179"/>
    </location>
</feature>
<feature type="transmembrane region" description="Helical" evidence="1">
    <location>
        <begin position="15"/>
        <end position="37"/>
    </location>
</feature>
<feature type="cross-link" description="Glycyl lysine isopeptide (Lys-Gly) (interchain with G-Cter in ubiquitin)" evidence="6">
    <location>
        <position position="47"/>
    </location>
</feature>
<feature type="cross-link" description="Glycyl lysine isopeptide (Lys-Gly) (interchain with G-Cter in ubiquitin)" evidence="6">
    <location>
        <position position="76"/>
    </location>
</feature>
<feature type="cross-link" description="Glycyl lysine isopeptide (Lys-Gly) (interchain with G-Cter in ubiquitin)" evidence="6">
    <location>
        <position position="81"/>
    </location>
</feature>
<feature type="cross-link" description="Glycyl lysine isopeptide (Lys-Gly) (interchain with G-Cter in ubiquitin)" evidence="6">
    <location>
        <position position="95"/>
    </location>
</feature>
<feature type="cross-link" description="Glycyl lysine isopeptide (Lys-Gly) (interchain with G-Cter in ubiquitin)" evidence="6">
    <location>
        <position position="106"/>
    </location>
</feature>
<feature type="cross-link" description="Glycyl lysine isopeptide (Lys-Gly) (interchain with G-Cter in ubiquitin)" evidence="6">
    <location>
        <position position="115"/>
    </location>
</feature>
<feature type="cross-link" description="Glycyl lysine isopeptide (Lys-Gly) (interchain with G-Cter in ubiquitin)" evidence="6">
    <location>
        <position position="171"/>
    </location>
</feature>
<feature type="cross-link" description="Glycyl lysine isopeptide (Lys-Gly) (interchain with G-Cter in ubiquitin)" evidence="6">
    <location>
        <position position="177"/>
    </location>
</feature>
<feature type="sequence variant" id="VAR_073386" description="In IMNEPD1; dbSNP:rs730882234." evidence="4">
    <original>Q</original>
    <variation>P</variation>
    <location>
        <position position="85"/>
    </location>
</feature>
<feature type="strand" evidence="9">
    <location>
        <begin position="65"/>
        <end position="72"/>
    </location>
</feature>
<feature type="helix" evidence="9">
    <location>
        <begin position="73"/>
        <end position="75"/>
    </location>
</feature>
<feature type="helix" evidence="9">
    <location>
        <begin position="79"/>
        <end position="100"/>
    </location>
</feature>
<feature type="helix" evidence="9">
    <location>
        <begin position="102"/>
        <end position="110"/>
    </location>
</feature>
<feature type="strand" evidence="9">
    <location>
        <begin position="115"/>
        <end position="122"/>
    </location>
</feature>
<feature type="helix" evidence="9">
    <location>
        <begin position="123"/>
        <end position="135"/>
    </location>
</feature>
<feature type="strand" evidence="9">
    <location>
        <begin position="140"/>
        <end position="145"/>
    </location>
</feature>
<feature type="strand" evidence="9">
    <location>
        <begin position="147"/>
        <end position="151"/>
    </location>
</feature>
<feature type="strand" evidence="9">
    <location>
        <begin position="153"/>
        <end position="165"/>
    </location>
</feature>
<feature type="helix" evidence="9">
    <location>
        <begin position="166"/>
        <end position="173"/>
    </location>
</feature>
<organism>
    <name type="scientific">Homo sapiens</name>
    <name type="common">Human</name>
    <dbReference type="NCBI Taxonomy" id="9606"/>
    <lineage>
        <taxon>Eukaryota</taxon>
        <taxon>Metazoa</taxon>
        <taxon>Chordata</taxon>
        <taxon>Craniata</taxon>
        <taxon>Vertebrata</taxon>
        <taxon>Euteleostomi</taxon>
        <taxon>Mammalia</taxon>
        <taxon>Eutheria</taxon>
        <taxon>Euarchontoglires</taxon>
        <taxon>Primates</taxon>
        <taxon>Haplorrhini</taxon>
        <taxon>Catarrhini</taxon>
        <taxon>Hominidae</taxon>
        <taxon>Homo</taxon>
    </lineage>
</organism>
<evidence type="ECO:0000255" key="1"/>
<evidence type="ECO:0000269" key="2">
    <source>
    </source>
</evidence>
<evidence type="ECO:0000269" key="3">
    <source>
    </source>
</evidence>
<evidence type="ECO:0000269" key="4">
    <source>
    </source>
</evidence>
<evidence type="ECO:0000269" key="5">
    <source>
    </source>
</evidence>
<evidence type="ECO:0000269" key="6">
    <source>
    </source>
</evidence>
<evidence type="ECO:0000269" key="7">
    <source>
    </source>
</evidence>
<evidence type="ECO:0000305" key="8"/>
<evidence type="ECO:0007829" key="9">
    <source>
        <dbReference type="PDB" id="1Q7S"/>
    </source>
</evidence>
<sequence>MPSKSLVMEYLAHPSTLGLAVGVACGMCLGWSLRVCFGMLPKSKTSKTHTDTESEASILGDSGEYKMILVVRNDLKMGKGKVAAQCSHAAVSAYKQIQRRNPEMLKQWEYCGQPKVVVKAPDEETLIALLAHAKMLGLTVSLIQDAGRTQIAPGSQTVLGIGPGPADLIDKVTGHLKLY</sequence>
<gene>
    <name type="primary">PTRH2</name>
    <name type="synonym">BIT1</name>
    <name type="synonym">PTH2</name>
    <name type="ORF">CGI-147</name>
</gene>
<dbReference type="EC" id="3.1.1.29" evidence="2"/>
<dbReference type="EMBL" id="AF151905">
    <property type="protein sequence ID" value="AAD34142.1"/>
    <property type="molecule type" value="mRNA"/>
</dbReference>
<dbReference type="EMBL" id="AK098219">
    <property type="protein sequence ID" value="BAG53596.1"/>
    <property type="molecule type" value="mRNA"/>
</dbReference>
<dbReference type="EMBL" id="CH471109">
    <property type="protein sequence ID" value="EAW94394.1"/>
    <property type="molecule type" value="Genomic_DNA"/>
</dbReference>
<dbReference type="EMBL" id="BC006807">
    <property type="protein sequence ID" value="AAH06807.1"/>
    <property type="molecule type" value="mRNA"/>
</dbReference>
<dbReference type="EMBL" id="AL137322">
    <property type="protein sequence ID" value="CAB70696.1"/>
    <property type="molecule type" value="mRNA"/>
</dbReference>
<dbReference type="CCDS" id="CCDS11618.1"/>
<dbReference type="PIR" id="T46479">
    <property type="entry name" value="T46479"/>
</dbReference>
<dbReference type="RefSeq" id="NP_001015509.1">
    <property type="nucleotide sequence ID" value="NM_001015509.2"/>
</dbReference>
<dbReference type="RefSeq" id="NP_057161.1">
    <property type="nucleotide sequence ID" value="NM_016077.5"/>
</dbReference>
<dbReference type="RefSeq" id="XP_011523189.1">
    <property type="nucleotide sequence ID" value="XM_011524887.3"/>
</dbReference>
<dbReference type="RefSeq" id="XP_054172388.1">
    <property type="nucleotide sequence ID" value="XM_054316413.1"/>
</dbReference>
<dbReference type="PDB" id="1Q7S">
    <property type="method" value="X-ray"/>
    <property type="resolution" value="2.00 A"/>
    <property type="chains" value="A/B=63-179"/>
</dbReference>
<dbReference type="PDBsum" id="1Q7S"/>
<dbReference type="SMR" id="Q9Y3E5"/>
<dbReference type="BioGRID" id="119659">
    <property type="interactions" value="255"/>
</dbReference>
<dbReference type="FunCoup" id="Q9Y3E5">
    <property type="interactions" value="3960"/>
</dbReference>
<dbReference type="IntAct" id="Q9Y3E5">
    <property type="interactions" value="78"/>
</dbReference>
<dbReference type="MINT" id="Q9Y3E5"/>
<dbReference type="STRING" id="9606.ENSP00000387180"/>
<dbReference type="MoonDB" id="Q9Y3E5">
    <property type="type" value="Curated"/>
</dbReference>
<dbReference type="MoonProt" id="Q9Y3E5"/>
<dbReference type="GlyGen" id="Q9Y3E5">
    <property type="glycosylation" value="1 site, 1 O-linked glycan (1 site)"/>
</dbReference>
<dbReference type="iPTMnet" id="Q9Y3E5"/>
<dbReference type="MetOSite" id="Q9Y3E5"/>
<dbReference type="PhosphoSitePlus" id="Q9Y3E5"/>
<dbReference type="SwissPalm" id="Q9Y3E5"/>
<dbReference type="BioMuta" id="PTRH2"/>
<dbReference type="DMDM" id="6686183"/>
<dbReference type="jPOST" id="Q9Y3E5"/>
<dbReference type="MassIVE" id="Q9Y3E5"/>
<dbReference type="PaxDb" id="9606-ENSP00000464327"/>
<dbReference type="PeptideAtlas" id="Q9Y3E5"/>
<dbReference type="ProteomicsDB" id="86030"/>
<dbReference type="Pumba" id="Q9Y3E5"/>
<dbReference type="TopDownProteomics" id="Q9Y3E5"/>
<dbReference type="Antibodypedia" id="2479">
    <property type="antibodies" value="381 antibodies from 37 providers"/>
</dbReference>
<dbReference type="DNASU" id="51651"/>
<dbReference type="Ensembl" id="ENST00000393038.3">
    <property type="protein sequence ID" value="ENSP00000376758.2"/>
    <property type="gene ID" value="ENSG00000141378.15"/>
</dbReference>
<dbReference type="Ensembl" id="ENST00000470557.2">
    <property type="protein sequence ID" value="ENSP00000464327.1"/>
    <property type="gene ID" value="ENSG00000141378.15"/>
</dbReference>
<dbReference type="GeneID" id="51651"/>
<dbReference type="KEGG" id="hsa:51651"/>
<dbReference type="MANE-Select" id="ENST00000393038.3">
    <property type="protein sequence ID" value="ENSP00000376758.2"/>
    <property type="RefSeq nucleotide sequence ID" value="NM_016077.5"/>
    <property type="RefSeq protein sequence ID" value="NP_057161.1"/>
</dbReference>
<dbReference type="UCSC" id="uc002ixt.4">
    <property type="organism name" value="human"/>
</dbReference>
<dbReference type="AGR" id="HGNC:24265"/>
<dbReference type="CTD" id="51651"/>
<dbReference type="DisGeNET" id="51651"/>
<dbReference type="GeneCards" id="PTRH2"/>
<dbReference type="GeneReviews" id="PTRH2"/>
<dbReference type="HGNC" id="HGNC:24265">
    <property type="gene designation" value="PTRH2"/>
</dbReference>
<dbReference type="HPA" id="ENSG00000141378">
    <property type="expression patterns" value="Low tissue specificity"/>
</dbReference>
<dbReference type="MalaCards" id="PTRH2"/>
<dbReference type="MIM" id="608625">
    <property type="type" value="gene"/>
</dbReference>
<dbReference type="MIM" id="616263">
    <property type="type" value="phenotype"/>
</dbReference>
<dbReference type="neXtProt" id="NX_Q9Y3E5"/>
<dbReference type="OpenTargets" id="ENSG00000141378"/>
<dbReference type="Orphanet" id="456312">
    <property type="disease" value="Infantile multisystem neurologic-endocrine-pancreatic disease"/>
</dbReference>
<dbReference type="PharmGKB" id="PA143485586"/>
<dbReference type="VEuPathDB" id="HostDB:ENSG00000141378"/>
<dbReference type="eggNOG" id="KOG3282">
    <property type="taxonomic scope" value="Eukaryota"/>
</dbReference>
<dbReference type="GeneTree" id="ENSGT00390000015991"/>
<dbReference type="HOGENOM" id="CLU_073661_1_1_1"/>
<dbReference type="InParanoid" id="Q9Y3E5"/>
<dbReference type="OMA" id="GHAAVEC"/>
<dbReference type="OrthoDB" id="1733656at2759"/>
<dbReference type="PAN-GO" id="Q9Y3E5">
    <property type="GO annotations" value="5 GO annotations based on evolutionary models"/>
</dbReference>
<dbReference type="PhylomeDB" id="Q9Y3E5"/>
<dbReference type="TreeFam" id="TF324583"/>
<dbReference type="BRENDA" id="3.1.1.29">
    <property type="organism ID" value="2681"/>
</dbReference>
<dbReference type="PathwayCommons" id="Q9Y3E5"/>
<dbReference type="Reactome" id="R-HSA-5689880">
    <property type="pathway name" value="Ub-specific processing proteases"/>
</dbReference>
<dbReference type="SignaLink" id="Q9Y3E5"/>
<dbReference type="SIGNOR" id="Q9Y3E5"/>
<dbReference type="BioGRID-ORCS" id="51651">
    <property type="hits" value="32 hits in 1072 CRISPR screens"/>
</dbReference>
<dbReference type="ChiTaRS" id="PTRH2">
    <property type="organism name" value="human"/>
</dbReference>
<dbReference type="EvolutionaryTrace" id="Q9Y3E5"/>
<dbReference type="GenomeRNAi" id="51651"/>
<dbReference type="Pharos" id="Q9Y3E5">
    <property type="development level" value="Tbio"/>
</dbReference>
<dbReference type="PRO" id="PR:Q9Y3E5"/>
<dbReference type="Proteomes" id="UP000005640">
    <property type="component" value="Chromosome 17"/>
</dbReference>
<dbReference type="RNAct" id="Q9Y3E5">
    <property type="molecule type" value="protein"/>
</dbReference>
<dbReference type="Bgee" id="ENSG00000141378">
    <property type="expression patterns" value="Expressed in cervix squamous epithelium and 205 other cell types or tissues"/>
</dbReference>
<dbReference type="ExpressionAtlas" id="Q9Y3E5">
    <property type="expression patterns" value="baseline and differential"/>
</dbReference>
<dbReference type="GO" id="GO:0005829">
    <property type="term" value="C:cytosol"/>
    <property type="evidence" value="ECO:0000315"/>
    <property type="project" value="UniProtKB"/>
</dbReference>
<dbReference type="GO" id="GO:0016020">
    <property type="term" value="C:membrane"/>
    <property type="evidence" value="ECO:0007005"/>
    <property type="project" value="UniProtKB"/>
</dbReference>
<dbReference type="GO" id="GO:0005741">
    <property type="term" value="C:mitochondrial outer membrane"/>
    <property type="evidence" value="ECO:0000314"/>
    <property type="project" value="UniProtKB"/>
</dbReference>
<dbReference type="GO" id="GO:0005739">
    <property type="term" value="C:mitochondrion"/>
    <property type="evidence" value="ECO:0000314"/>
    <property type="project" value="UniProtKB"/>
</dbReference>
<dbReference type="GO" id="GO:0004045">
    <property type="term" value="F:peptidyl-tRNA hydrolase activity"/>
    <property type="evidence" value="ECO:0000315"/>
    <property type="project" value="CAFA"/>
</dbReference>
<dbReference type="GO" id="GO:0006915">
    <property type="term" value="P:apoptotic process"/>
    <property type="evidence" value="ECO:0007669"/>
    <property type="project" value="UniProtKB-KW"/>
</dbReference>
<dbReference type="GO" id="GO:2000811">
    <property type="term" value="P:negative regulation of anoikis"/>
    <property type="evidence" value="ECO:0000315"/>
    <property type="project" value="UniProtKB"/>
</dbReference>
<dbReference type="GO" id="GO:0010629">
    <property type="term" value="P:negative regulation of gene expression"/>
    <property type="evidence" value="ECO:0000315"/>
    <property type="project" value="UniProtKB"/>
</dbReference>
<dbReference type="GO" id="GO:2000210">
    <property type="term" value="P:positive regulation of anoikis"/>
    <property type="evidence" value="ECO:0000315"/>
    <property type="project" value="UniProtKB"/>
</dbReference>
<dbReference type="CDD" id="cd02430">
    <property type="entry name" value="PTH2"/>
    <property type="match status" value="1"/>
</dbReference>
<dbReference type="FunFam" id="3.40.1490.10:FF:000001">
    <property type="entry name" value="Peptidyl-tRNA hydrolase 2"/>
    <property type="match status" value="1"/>
</dbReference>
<dbReference type="Gene3D" id="3.40.1490.10">
    <property type="entry name" value="Bit1"/>
    <property type="match status" value="1"/>
</dbReference>
<dbReference type="InterPro" id="IPR023476">
    <property type="entry name" value="Pep_tRNA_hydro_II_dom_sf"/>
</dbReference>
<dbReference type="InterPro" id="IPR002833">
    <property type="entry name" value="PTH2"/>
</dbReference>
<dbReference type="NCBIfam" id="TIGR00283">
    <property type="entry name" value="arch_pth2"/>
    <property type="match status" value="1"/>
</dbReference>
<dbReference type="NCBIfam" id="NF003314">
    <property type="entry name" value="PRK04322.1"/>
    <property type="match status" value="1"/>
</dbReference>
<dbReference type="PANTHER" id="PTHR12649">
    <property type="entry name" value="PEPTIDYL-TRNA HYDROLASE 2"/>
    <property type="match status" value="1"/>
</dbReference>
<dbReference type="PANTHER" id="PTHR12649:SF11">
    <property type="entry name" value="PEPTIDYL-TRNA HYDROLASE 2, MITOCHONDRIAL"/>
    <property type="match status" value="1"/>
</dbReference>
<dbReference type="Pfam" id="PF01981">
    <property type="entry name" value="PTH2"/>
    <property type="match status" value="1"/>
</dbReference>
<dbReference type="SUPFAM" id="SSF102462">
    <property type="entry name" value="Peptidyl-tRNA hydrolase II"/>
    <property type="match status" value="1"/>
</dbReference>
<name>PTH2_HUMAN</name>
<proteinExistence type="evidence at protein level"/>
<accession>Q9Y3E5</accession>
<accession>B3KUY4</accession>
<accession>Q9NTE5</accession>
<reference key="1">
    <citation type="journal article" date="2000" name="Genome Res.">
        <title>Identification of novel human genes evolutionarily conserved in Caenorhabditis elegans by comparative proteomics.</title>
        <authorList>
            <person name="Lai C.-H."/>
            <person name="Chou C.-Y."/>
            <person name="Ch'ang L.-Y."/>
            <person name="Liu C.-S."/>
            <person name="Lin W.-C."/>
        </authorList>
    </citation>
    <scope>NUCLEOTIDE SEQUENCE [LARGE SCALE MRNA]</scope>
</reference>
<reference key="2">
    <citation type="journal article" date="2004" name="Nat. Genet.">
        <title>Complete sequencing and characterization of 21,243 full-length human cDNAs.</title>
        <authorList>
            <person name="Ota T."/>
            <person name="Suzuki Y."/>
            <person name="Nishikawa T."/>
            <person name="Otsuki T."/>
            <person name="Sugiyama T."/>
            <person name="Irie R."/>
            <person name="Wakamatsu A."/>
            <person name="Hayashi K."/>
            <person name="Sato H."/>
            <person name="Nagai K."/>
            <person name="Kimura K."/>
            <person name="Makita H."/>
            <person name="Sekine M."/>
            <person name="Obayashi M."/>
            <person name="Nishi T."/>
            <person name="Shibahara T."/>
            <person name="Tanaka T."/>
            <person name="Ishii S."/>
            <person name="Yamamoto J."/>
            <person name="Saito K."/>
            <person name="Kawai Y."/>
            <person name="Isono Y."/>
            <person name="Nakamura Y."/>
            <person name="Nagahari K."/>
            <person name="Murakami K."/>
            <person name="Yasuda T."/>
            <person name="Iwayanagi T."/>
            <person name="Wagatsuma M."/>
            <person name="Shiratori A."/>
            <person name="Sudo H."/>
            <person name="Hosoiri T."/>
            <person name="Kaku Y."/>
            <person name="Kodaira H."/>
            <person name="Kondo H."/>
            <person name="Sugawara M."/>
            <person name="Takahashi M."/>
            <person name="Kanda K."/>
            <person name="Yokoi T."/>
            <person name="Furuya T."/>
            <person name="Kikkawa E."/>
            <person name="Omura Y."/>
            <person name="Abe K."/>
            <person name="Kamihara K."/>
            <person name="Katsuta N."/>
            <person name="Sato K."/>
            <person name="Tanikawa M."/>
            <person name="Yamazaki M."/>
            <person name="Ninomiya K."/>
            <person name="Ishibashi T."/>
            <person name="Yamashita H."/>
            <person name="Murakawa K."/>
            <person name="Fujimori K."/>
            <person name="Tanai H."/>
            <person name="Kimata M."/>
            <person name="Watanabe M."/>
            <person name="Hiraoka S."/>
            <person name="Chiba Y."/>
            <person name="Ishida S."/>
            <person name="Ono Y."/>
            <person name="Takiguchi S."/>
            <person name="Watanabe S."/>
            <person name="Yosida M."/>
            <person name="Hotuta T."/>
            <person name="Kusano J."/>
            <person name="Kanehori K."/>
            <person name="Takahashi-Fujii A."/>
            <person name="Hara H."/>
            <person name="Tanase T.-O."/>
            <person name="Nomura Y."/>
            <person name="Togiya S."/>
            <person name="Komai F."/>
            <person name="Hara R."/>
            <person name="Takeuchi K."/>
            <person name="Arita M."/>
            <person name="Imose N."/>
            <person name="Musashino K."/>
            <person name="Yuuki H."/>
            <person name="Oshima A."/>
            <person name="Sasaki N."/>
            <person name="Aotsuka S."/>
            <person name="Yoshikawa Y."/>
            <person name="Matsunawa H."/>
            <person name="Ichihara T."/>
            <person name="Shiohata N."/>
            <person name="Sano S."/>
            <person name="Moriya S."/>
            <person name="Momiyama H."/>
            <person name="Satoh N."/>
            <person name="Takami S."/>
            <person name="Terashima Y."/>
            <person name="Suzuki O."/>
            <person name="Nakagawa S."/>
            <person name="Senoh A."/>
            <person name="Mizoguchi H."/>
            <person name="Goto Y."/>
            <person name="Shimizu F."/>
            <person name="Wakebe H."/>
            <person name="Hishigaki H."/>
            <person name="Watanabe T."/>
            <person name="Sugiyama A."/>
            <person name="Takemoto M."/>
            <person name="Kawakami B."/>
            <person name="Yamazaki M."/>
            <person name="Watanabe K."/>
            <person name="Kumagai A."/>
            <person name="Itakura S."/>
            <person name="Fukuzumi Y."/>
            <person name="Fujimori Y."/>
            <person name="Komiyama M."/>
            <person name="Tashiro H."/>
            <person name="Tanigami A."/>
            <person name="Fujiwara T."/>
            <person name="Ono T."/>
            <person name="Yamada K."/>
            <person name="Fujii Y."/>
            <person name="Ozaki K."/>
            <person name="Hirao M."/>
            <person name="Ohmori Y."/>
            <person name="Kawabata A."/>
            <person name="Hikiji T."/>
            <person name="Kobatake N."/>
            <person name="Inagaki H."/>
            <person name="Ikema Y."/>
            <person name="Okamoto S."/>
            <person name="Okitani R."/>
            <person name="Kawakami T."/>
            <person name="Noguchi S."/>
            <person name="Itoh T."/>
            <person name="Shigeta K."/>
            <person name="Senba T."/>
            <person name="Matsumura K."/>
            <person name="Nakajima Y."/>
            <person name="Mizuno T."/>
            <person name="Morinaga M."/>
            <person name="Sasaki M."/>
            <person name="Togashi T."/>
            <person name="Oyama M."/>
            <person name="Hata H."/>
            <person name="Watanabe M."/>
            <person name="Komatsu T."/>
            <person name="Mizushima-Sugano J."/>
            <person name="Satoh T."/>
            <person name="Shirai Y."/>
            <person name="Takahashi Y."/>
            <person name="Nakagawa K."/>
            <person name="Okumura K."/>
            <person name="Nagase T."/>
            <person name="Nomura N."/>
            <person name="Kikuchi H."/>
            <person name="Masuho Y."/>
            <person name="Yamashita R."/>
            <person name="Nakai K."/>
            <person name="Yada T."/>
            <person name="Nakamura Y."/>
            <person name="Ohara O."/>
            <person name="Isogai T."/>
            <person name="Sugano S."/>
        </authorList>
    </citation>
    <scope>NUCLEOTIDE SEQUENCE [LARGE SCALE MRNA]</scope>
    <source>
        <tissue>Uterus</tissue>
    </source>
</reference>
<reference key="3">
    <citation type="submission" date="2005-09" db="EMBL/GenBank/DDBJ databases">
        <authorList>
            <person name="Mural R.J."/>
            <person name="Istrail S."/>
            <person name="Sutton G.G."/>
            <person name="Florea L."/>
            <person name="Halpern A.L."/>
            <person name="Mobarry C.M."/>
            <person name="Lippert R."/>
            <person name="Walenz B."/>
            <person name="Shatkay H."/>
            <person name="Dew I."/>
            <person name="Miller J.R."/>
            <person name="Flanigan M.J."/>
            <person name="Edwards N.J."/>
            <person name="Bolanos R."/>
            <person name="Fasulo D."/>
            <person name="Halldorsson B.V."/>
            <person name="Hannenhalli S."/>
            <person name="Turner R."/>
            <person name="Yooseph S."/>
            <person name="Lu F."/>
            <person name="Nusskern D.R."/>
            <person name="Shue B.C."/>
            <person name="Zheng X.H."/>
            <person name="Zhong F."/>
            <person name="Delcher A.L."/>
            <person name="Huson D.H."/>
            <person name="Kravitz S.A."/>
            <person name="Mouchard L."/>
            <person name="Reinert K."/>
            <person name="Remington K.A."/>
            <person name="Clark A.G."/>
            <person name="Waterman M.S."/>
            <person name="Eichler E.E."/>
            <person name="Adams M.D."/>
            <person name="Hunkapiller M.W."/>
            <person name="Myers E.W."/>
            <person name="Venter J.C."/>
        </authorList>
    </citation>
    <scope>NUCLEOTIDE SEQUENCE [LARGE SCALE GENOMIC DNA]</scope>
</reference>
<reference key="4">
    <citation type="journal article" date="2004" name="Genome Res.">
        <title>The status, quality, and expansion of the NIH full-length cDNA project: the Mammalian Gene Collection (MGC).</title>
        <authorList>
            <consortium name="The MGC Project Team"/>
        </authorList>
    </citation>
    <scope>NUCLEOTIDE SEQUENCE [LARGE SCALE MRNA]</scope>
    <source>
        <tissue>Placenta</tissue>
    </source>
</reference>
<reference key="5">
    <citation type="journal article" date="2007" name="BMC Genomics">
        <title>The full-ORF clone resource of the German cDNA consortium.</title>
        <authorList>
            <person name="Bechtel S."/>
            <person name="Rosenfelder H."/>
            <person name="Duda A."/>
            <person name="Schmidt C.P."/>
            <person name="Ernst U."/>
            <person name="Wellenreuther R."/>
            <person name="Mehrle A."/>
            <person name="Schuster C."/>
            <person name="Bahr A."/>
            <person name="Bloecker H."/>
            <person name="Heubner D."/>
            <person name="Hoerlein A."/>
            <person name="Michel G."/>
            <person name="Wedler H."/>
            <person name="Koehrer K."/>
            <person name="Ottenwaelder B."/>
            <person name="Poustka A."/>
            <person name="Wiemann S."/>
            <person name="Schupp I."/>
        </authorList>
    </citation>
    <scope>NUCLEOTIDE SEQUENCE [LARGE SCALE MRNA] OF 4-179</scope>
    <source>
        <tissue>Testis</tissue>
    </source>
</reference>
<reference key="6">
    <citation type="journal article" date="2004" name="Cell">
        <title>A mitochondrial protein, Bit1, mediates apoptosis regulated by integrins and Groucho/TLE corepressors.</title>
        <authorList>
            <person name="Jan Y."/>
            <person name="Matter M."/>
            <person name="Pai J.-T."/>
            <person name="Chen Y.-L."/>
            <person name="Pilch J."/>
            <person name="Komatsu M."/>
            <person name="Ong E."/>
            <person name="Fukuda M."/>
            <person name="Ruoslahti E."/>
        </authorList>
    </citation>
    <scope>FUNCTION IN APOPTOSIS</scope>
</reference>
<reference key="7">
    <citation type="journal article" date="2008" name="Proc. Natl. Acad. Sci. U.S.A.">
        <title>A quantitative atlas of mitotic phosphorylation.</title>
        <authorList>
            <person name="Dephoure N."/>
            <person name="Zhou C."/>
            <person name="Villen J."/>
            <person name="Beausoleil S.A."/>
            <person name="Bakalarski C.E."/>
            <person name="Elledge S.J."/>
            <person name="Gygi S.P."/>
        </authorList>
    </citation>
    <scope>IDENTIFICATION BY MASS SPECTROMETRY [LARGE SCALE ANALYSIS]</scope>
    <source>
        <tissue>Cervix carcinoma</tissue>
    </source>
</reference>
<reference key="8">
    <citation type="journal article" date="2011" name="BMC Syst. Biol.">
        <title>Initial characterization of the human central proteome.</title>
        <authorList>
            <person name="Burkard T.R."/>
            <person name="Planyavsky M."/>
            <person name="Kaupe I."/>
            <person name="Breitwieser F.P."/>
            <person name="Buerckstuemmer T."/>
            <person name="Bennett K.L."/>
            <person name="Superti-Furga G."/>
            <person name="Colinge J."/>
        </authorList>
    </citation>
    <scope>IDENTIFICATION BY MASS SPECTROMETRY [LARGE SCALE ANALYSIS]</scope>
</reference>
<reference key="9">
    <citation type="journal article" date="2013" name="J. Proteome Res.">
        <title>Toward a comprehensive characterization of a human cancer cell phosphoproteome.</title>
        <authorList>
            <person name="Zhou H."/>
            <person name="Di Palma S."/>
            <person name="Preisinger C."/>
            <person name="Peng M."/>
            <person name="Polat A.N."/>
            <person name="Heck A.J."/>
            <person name="Mohammed S."/>
        </authorList>
    </citation>
    <scope>IDENTIFICATION BY MASS SPECTROMETRY [LARGE SCALE ANALYSIS]</scope>
    <source>
        <tissue>Cervix carcinoma</tissue>
        <tissue>Erythroleukemia</tissue>
    </source>
</reference>
<reference key="10">
    <citation type="journal article" date="2014" name="Ann. Clin. Transl. Neurol.">
        <title>Mutations in PTRH2 cause novel infantile-onset multisystem disease with intellectual disability, microcephaly, progressive ataxia, and muscle weakness.</title>
        <authorList>
            <person name="Hu H."/>
            <person name="Matter M.L."/>
            <person name="Issa-Jahns L."/>
            <person name="Jijiwa M."/>
            <person name="Kraemer N."/>
            <person name="Musante L."/>
            <person name="de la Vega M."/>
            <person name="Ninnemann O."/>
            <person name="Schindler D."/>
            <person name="Damatova N."/>
            <person name="Eirich K."/>
            <person name="Sifringer M."/>
            <person name="Schroetter S."/>
            <person name="Eickholt B.J."/>
            <person name="van den Heuvel L."/>
            <person name="Casamina C."/>
            <person name="Stoltenburg-Didinger G."/>
            <person name="Ropers H.H."/>
            <person name="Wienker T.F."/>
            <person name="Huebner C."/>
            <person name="Kaindl A.M."/>
        </authorList>
    </citation>
    <scope>INVOLVEMENT IN IMNEPD1</scope>
</reference>
<reference key="11">
    <citation type="journal article" date="2015" name="Cell Rep.">
        <title>Accelerating novel candidate gene discovery in neurogenetic disorders via whole-exome sequencing of prescreened multiplex consanguineous families.</title>
        <authorList>
            <person name="Alazami A.M."/>
            <person name="Patel N."/>
            <person name="Shamseldin H.E."/>
            <person name="Anazi S."/>
            <person name="Al-Dosari M.S."/>
            <person name="Alzahrani F."/>
            <person name="Hijazi H."/>
            <person name="Alshammari M."/>
            <person name="Aldahmesh M.A."/>
            <person name="Salih M.A."/>
            <person name="Faqeih E."/>
            <person name="Alhashem A."/>
            <person name="Bashiri F.A."/>
            <person name="Al-Owain M."/>
            <person name="Kentab A.Y."/>
            <person name="Sogaty S."/>
            <person name="Al Tala S."/>
            <person name="Temsah M.H."/>
            <person name="Tulbah M."/>
            <person name="Aljelaify R.F."/>
            <person name="Alshahwan S.A."/>
            <person name="Seidahmed M.Z."/>
            <person name="Alhadid A.A."/>
            <person name="Aldhalaan H."/>
            <person name="Alqallaf F."/>
            <person name="Kurdi W."/>
            <person name="Alfadhel M."/>
            <person name="Babay Z."/>
            <person name="Alsogheer M."/>
            <person name="Kaya N."/>
            <person name="Al-Hassnan Z.N."/>
            <person name="Abdel-Salam G.M."/>
            <person name="Al-Sannaa N."/>
            <person name="Al Mutairi F."/>
            <person name="El Khashab H.Y."/>
            <person name="Bohlega S."/>
            <person name="Jia X."/>
            <person name="Nguyen H.C."/>
            <person name="Hammami R."/>
            <person name="Adly N."/>
            <person name="Mohamed J.Y."/>
            <person name="Abdulwahab F."/>
            <person name="Ibrahim N."/>
            <person name="Naim E.A."/>
            <person name="Al-Younes B."/>
            <person name="Meyer B.F."/>
            <person name="Hashem M."/>
            <person name="Shaheen R."/>
            <person name="Xiong Y."/>
            <person name="Abouelhoda M."/>
            <person name="Aldeeri A.A."/>
            <person name="Monies D.M."/>
            <person name="Alkuraya F.S."/>
        </authorList>
    </citation>
    <scope>INVOLVEMENT IN IMNEPD1</scope>
    <scope>VARIANT IMNEPD1 PRO-85</scope>
</reference>
<reference key="12">
    <citation type="journal article" date="2015" name="Nat. Cell Biol.">
        <title>USP30 and parkin homeostatically regulate atypical ubiquitin chains on mitochondria.</title>
        <authorList>
            <person name="Cunningham C.N."/>
            <person name="Baughman J.M."/>
            <person name="Phu L."/>
            <person name="Tea J.S."/>
            <person name="Yu C."/>
            <person name="Coons M."/>
            <person name="Kirkpatrick D.S."/>
            <person name="Bingol B."/>
            <person name="Corn J.E."/>
        </authorList>
    </citation>
    <scope>UBIQUITINATION AT LYS-47; LYS-76; LYS-81; LYS-95; LYS-106; LYS-115; LYS-171 AND LYS-177</scope>
</reference>
<reference key="13">
    <citation type="journal article" date="2015" name="Proteomics">
        <title>N-terminome analysis of the human mitochondrial proteome.</title>
        <authorList>
            <person name="Vaca Jacome A.S."/>
            <person name="Rabilloud T."/>
            <person name="Schaeffer-Reiss C."/>
            <person name="Rompais M."/>
            <person name="Ayoub D."/>
            <person name="Lane L."/>
            <person name="Bairoch A."/>
            <person name="Van Dorsselaer A."/>
            <person name="Carapito C."/>
        </authorList>
    </citation>
    <scope>IDENTIFICATION BY MASS SPECTROMETRY [LARGE SCALE ANALYSIS]</scope>
</reference>
<reference key="14">
    <citation type="journal article" date="2016" name="Cell Rep.">
        <title>APEX Fingerprinting Reveals the Subcellular Localization of Proteins of Interest.</title>
        <authorList>
            <person name="Lee S.Y."/>
            <person name="Kang M.G."/>
            <person name="Park J.S."/>
            <person name="Lee G."/>
            <person name="Ting A.Y."/>
            <person name="Rhee H.W."/>
        </authorList>
    </citation>
    <scope>SUBCELLULAR LOCATION</scope>
</reference>
<reference key="15">
    <citation type="journal article" date="2004" name="J. Biol. Chem.">
        <title>Crystal structure of a human peptidyl-tRNA hydrolase reveals a new fold and suggests basis for a bifunctional activity.</title>
        <authorList>
            <person name="De Pereda J.M."/>
            <person name="Waas W.F."/>
            <person name="Jan Y."/>
            <person name="Ruoslahti E."/>
            <person name="Schimmel P."/>
            <person name="Pascual J."/>
        </authorList>
    </citation>
    <scope>X-RAY CRYSTALLOGRAPHY (2.0 ANGSTROMS) OF 63-179</scope>
    <scope>CATALYTIC ACTIVITY</scope>
    <scope>FUNCTION</scope>
</reference>
<comment type="function">
    <text evidence="2 3">Peptidyl-tRNA hydrolase which releases tRNAs from the ribosome during protein synthesis (PubMed:14660562). Promotes caspase-independent apoptosis by regulating the function of two transcriptional regulators, AES and TLE1.</text>
</comment>
<comment type="catalytic activity">
    <reaction evidence="2">
        <text>an N-acyl-L-alpha-aminoacyl-tRNA + H2O = an N-acyl-L-amino acid + a tRNA + H(+)</text>
        <dbReference type="Rhea" id="RHEA:54448"/>
        <dbReference type="Rhea" id="RHEA-COMP:10123"/>
        <dbReference type="Rhea" id="RHEA-COMP:13883"/>
        <dbReference type="ChEBI" id="CHEBI:15377"/>
        <dbReference type="ChEBI" id="CHEBI:15378"/>
        <dbReference type="ChEBI" id="CHEBI:59874"/>
        <dbReference type="ChEBI" id="CHEBI:78442"/>
        <dbReference type="ChEBI" id="CHEBI:138191"/>
        <dbReference type="EC" id="3.1.1.29"/>
    </reaction>
</comment>
<comment type="subunit">
    <text>Monomer.</text>
</comment>
<comment type="interaction">
    <interactant intactId="EBI-1056751">
        <id>Q9Y3E5</id>
    </interactant>
    <interactant intactId="EBI-2836587">
        <id>P09564</id>
        <label>CD7</label>
    </interactant>
    <organismsDiffer>false</organismsDiffer>
    <experiments>3</experiments>
</comment>
<comment type="interaction">
    <interactant intactId="EBI-1056751">
        <id>Q9Y3E5</id>
    </interactant>
    <interactant intactId="EBI-702142">
        <id>Q05397</id>
        <label>PTK2</label>
    </interactant>
    <organismsDiffer>false</organismsDiffer>
    <experiments>2</experiments>
</comment>
<comment type="interaction">
    <interactant intactId="EBI-1056751">
        <id>Q9Y3E5</id>
    </interactant>
    <interactant intactId="EBI-717810">
        <id>Q08117</id>
        <label>TLE5</label>
    </interactant>
    <organismsDiffer>false</organismsDiffer>
    <experiments>7</experiments>
</comment>
<comment type="subcellular location">
    <subcellularLocation>
        <location evidence="7">Mitochondrion outer membrane</location>
        <topology evidence="1">Single-pass membrane protein</topology>
    </subcellularLocation>
</comment>
<comment type="PTM">
    <text evidence="6">Ubiquitinated by PRKN during mitophagy, leading to its degradation and enhancement of mitophagy. Deubiquitinated by USP30.</text>
</comment>
<comment type="disease" evidence="4 5">
    <disease id="DI-04353">
        <name>Neurologic, endocrine, and pancreatic disease, multisystem, infantile-onset 1</name>
        <acronym>IMNEPD1</acronym>
        <description>A progressive multisystem disease characterized by a variety of neurologic, endocrine, and, in some patients, pancreatic features. Variable clinical symptoms include global developmental delay, hypotonia, hearing loss, ataxia, hyporeflexia, facial dysmorphism, hypothyroidism, and pancreatic insufficiency.</description>
        <dbReference type="MIM" id="616263"/>
    </disease>
    <text>The disease is caused by variants affecting the gene represented in this entry.</text>
</comment>
<comment type="similarity">
    <text evidence="8">Belongs to the PTH2 family.</text>
</comment>